<reference key="1">
    <citation type="journal article" date="2002" name="Proc. Natl. Acad. Sci. U.S.A.">
        <title>Genome sequence and comparative microarray analysis of serotype M18 group A Streptococcus strains associated with acute rheumatic fever outbreaks.</title>
        <authorList>
            <person name="Smoot J.C."/>
            <person name="Barbian K.D."/>
            <person name="Van Gompel J.J."/>
            <person name="Smoot L.M."/>
            <person name="Chaussee M.S."/>
            <person name="Sylva G.L."/>
            <person name="Sturdevant D.E."/>
            <person name="Ricklefs S.M."/>
            <person name="Porcella S.F."/>
            <person name="Parkins L.D."/>
            <person name="Beres S.B."/>
            <person name="Campbell D.S."/>
            <person name="Smith T.M."/>
            <person name="Zhang Q."/>
            <person name="Kapur V."/>
            <person name="Daly J.A."/>
            <person name="Veasy L.G."/>
            <person name="Musser J.M."/>
        </authorList>
    </citation>
    <scope>NUCLEOTIDE SEQUENCE [LARGE SCALE GENOMIC DNA]</scope>
    <source>
        <strain>MGAS8232</strain>
    </source>
</reference>
<evidence type="ECO:0000255" key="1">
    <source>
        <dbReference type="HAMAP-Rule" id="MF_01543"/>
    </source>
</evidence>
<feature type="chain" id="PRO_0000199391" description="Formate--tetrahydrofolate ligase 1">
    <location>
        <begin position="1"/>
        <end position="556"/>
    </location>
</feature>
<feature type="binding site" evidence="1">
    <location>
        <begin position="65"/>
        <end position="72"/>
    </location>
    <ligand>
        <name>ATP</name>
        <dbReference type="ChEBI" id="CHEBI:30616"/>
    </ligand>
</feature>
<keyword id="KW-0067">ATP-binding</keyword>
<keyword id="KW-0436">Ligase</keyword>
<keyword id="KW-0547">Nucleotide-binding</keyword>
<keyword id="KW-0554">One-carbon metabolism</keyword>
<dbReference type="EC" id="6.3.4.3" evidence="1"/>
<dbReference type="EMBL" id="AE009949">
    <property type="protein sequence ID" value="AAL97781.1"/>
    <property type="molecule type" value="Genomic_DNA"/>
</dbReference>
<dbReference type="RefSeq" id="WP_011017800.1">
    <property type="nucleotide sequence ID" value="NC_003485.1"/>
</dbReference>
<dbReference type="SMR" id="Q8P0X5"/>
<dbReference type="KEGG" id="spm:spyM18_1165"/>
<dbReference type="HOGENOM" id="CLU_003601_3_3_9"/>
<dbReference type="UniPathway" id="UPA00193"/>
<dbReference type="GO" id="GO:0005524">
    <property type="term" value="F:ATP binding"/>
    <property type="evidence" value="ECO:0007669"/>
    <property type="project" value="UniProtKB-UniRule"/>
</dbReference>
<dbReference type="GO" id="GO:0004329">
    <property type="term" value="F:formate-tetrahydrofolate ligase activity"/>
    <property type="evidence" value="ECO:0007669"/>
    <property type="project" value="UniProtKB-UniRule"/>
</dbReference>
<dbReference type="GO" id="GO:0035999">
    <property type="term" value="P:tetrahydrofolate interconversion"/>
    <property type="evidence" value="ECO:0007669"/>
    <property type="project" value="UniProtKB-UniRule"/>
</dbReference>
<dbReference type="CDD" id="cd00477">
    <property type="entry name" value="FTHFS"/>
    <property type="match status" value="1"/>
</dbReference>
<dbReference type="FunFam" id="3.30.1510.10:FF:000001">
    <property type="entry name" value="Formate--tetrahydrofolate ligase"/>
    <property type="match status" value="1"/>
</dbReference>
<dbReference type="FunFam" id="3.10.410.10:FF:000001">
    <property type="entry name" value="Putative formate--tetrahydrofolate ligase"/>
    <property type="match status" value="1"/>
</dbReference>
<dbReference type="Gene3D" id="3.30.1510.10">
    <property type="entry name" value="Domain 2, N(10)-formyltetrahydrofolate synthetase"/>
    <property type="match status" value="1"/>
</dbReference>
<dbReference type="Gene3D" id="3.10.410.10">
    <property type="entry name" value="Formyltetrahydrofolate synthetase, domain 3"/>
    <property type="match status" value="1"/>
</dbReference>
<dbReference type="Gene3D" id="3.40.50.300">
    <property type="entry name" value="P-loop containing nucleotide triphosphate hydrolases"/>
    <property type="match status" value="1"/>
</dbReference>
<dbReference type="HAMAP" id="MF_01543">
    <property type="entry name" value="FTHFS"/>
    <property type="match status" value="1"/>
</dbReference>
<dbReference type="InterPro" id="IPR000559">
    <property type="entry name" value="Formate_THF_ligase"/>
</dbReference>
<dbReference type="InterPro" id="IPR020628">
    <property type="entry name" value="Formate_THF_ligase_CS"/>
</dbReference>
<dbReference type="InterPro" id="IPR027417">
    <property type="entry name" value="P-loop_NTPase"/>
</dbReference>
<dbReference type="NCBIfam" id="NF010030">
    <property type="entry name" value="PRK13505.1"/>
    <property type="match status" value="1"/>
</dbReference>
<dbReference type="Pfam" id="PF01268">
    <property type="entry name" value="FTHFS"/>
    <property type="match status" value="1"/>
</dbReference>
<dbReference type="SUPFAM" id="SSF52540">
    <property type="entry name" value="P-loop containing nucleoside triphosphate hydrolases"/>
    <property type="match status" value="1"/>
</dbReference>
<dbReference type="PROSITE" id="PS00721">
    <property type="entry name" value="FTHFS_1"/>
    <property type="match status" value="1"/>
</dbReference>
<dbReference type="PROSITE" id="PS00722">
    <property type="entry name" value="FTHFS_2"/>
    <property type="match status" value="1"/>
</dbReference>
<gene>
    <name evidence="1" type="primary">fhs1</name>
    <name type="synonym">fhs</name>
    <name type="ordered locus">spyM18_1165</name>
</gene>
<sequence length="556" mass="59503">MKSDIEIAQSVALQPITDIVKKVGIDGDDIELYGKYKAKLSFEKMKAVEANEPGKLLLVTAINPTPAGEGKSTMSIGLADALNQMGKKTMLALREPSLGPVMGIKGGAAGGGYAQVLPMEDINLHFTGDMHAITTANNALSALIDNHLQQGNDLGIDPRRIIWKRVLDLNDRALRQVIVGLGSPVNGVPREDGFDITVASEIMAILCLATDLKDLKKRLADIVVAYTYDRKPVYVRDLKVEGALTLILKDAIKPNLVQTIYGTPALIHGGPFANIAHGCNSVLATSTALRLADYTVTEAGFGADLGAEKFLNIKVPNLPKAPDAIVIVATLRALKMHGGVAKSDLAAENCEAVRLGFANLKRHVENMRQFKVPVVVAINEFVADTEAEIATLKALCEEIKVPVELASVWANGAEGGLALAKTAVRVIDQEAADYKRLYSDEDTLEEKVINIVTQIYGGKAVQFGPKAKTQLKQFAEFGWDKLPVCMAKTQYSFSDNPSLLGAPTDFDITIREFVPKTGAGFIVGLTGDVMTMPGLPKVPAAMAMDVAENGTALGLF</sequence>
<protein>
    <recommendedName>
        <fullName evidence="1">Formate--tetrahydrofolate ligase 1</fullName>
        <ecNumber evidence="1">6.3.4.3</ecNumber>
    </recommendedName>
    <alternativeName>
        <fullName evidence="1">Formyltetrahydrofolate synthetase 1</fullName>
        <shortName evidence="1">FHS 1</shortName>
        <shortName evidence="1">FTHFS 1</shortName>
    </alternativeName>
</protein>
<name>FTHS1_STRP8</name>
<proteinExistence type="inferred from homology"/>
<accession>Q8P0X5</accession>
<comment type="catalytic activity">
    <reaction evidence="1">
        <text>(6S)-5,6,7,8-tetrahydrofolate + formate + ATP = (6R)-10-formyltetrahydrofolate + ADP + phosphate</text>
        <dbReference type="Rhea" id="RHEA:20221"/>
        <dbReference type="ChEBI" id="CHEBI:15740"/>
        <dbReference type="ChEBI" id="CHEBI:30616"/>
        <dbReference type="ChEBI" id="CHEBI:43474"/>
        <dbReference type="ChEBI" id="CHEBI:57453"/>
        <dbReference type="ChEBI" id="CHEBI:195366"/>
        <dbReference type="ChEBI" id="CHEBI:456216"/>
        <dbReference type="EC" id="6.3.4.3"/>
    </reaction>
</comment>
<comment type="pathway">
    <text evidence="1">One-carbon metabolism; tetrahydrofolate interconversion.</text>
</comment>
<comment type="similarity">
    <text evidence="1">Belongs to the formate--tetrahydrofolate ligase family.</text>
</comment>
<organism>
    <name type="scientific">Streptococcus pyogenes serotype M18 (strain MGAS8232)</name>
    <dbReference type="NCBI Taxonomy" id="186103"/>
    <lineage>
        <taxon>Bacteria</taxon>
        <taxon>Bacillati</taxon>
        <taxon>Bacillota</taxon>
        <taxon>Bacilli</taxon>
        <taxon>Lactobacillales</taxon>
        <taxon>Streptococcaceae</taxon>
        <taxon>Streptococcus</taxon>
    </lineage>
</organism>